<dbReference type="EC" id="7.2.1.4" evidence="1"/>
<dbReference type="EMBL" id="BX950229">
    <property type="protein sequence ID" value="CAF31123.1"/>
    <property type="molecule type" value="Genomic_DNA"/>
</dbReference>
<dbReference type="RefSeq" id="WP_011171511.1">
    <property type="nucleotide sequence ID" value="NC_005791.1"/>
</dbReference>
<dbReference type="SMR" id="Q6LWY7"/>
<dbReference type="STRING" id="267377.MMP1567"/>
<dbReference type="EnsemblBacteria" id="CAF31123">
    <property type="protein sequence ID" value="CAF31123"/>
    <property type="gene ID" value="MMP1567"/>
</dbReference>
<dbReference type="GeneID" id="41280208"/>
<dbReference type="KEGG" id="mmp:MMP1567"/>
<dbReference type="PATRIC" id="fig|267377.15.peg.1605"/>
<dbReference type="eggNOG" id="arCOG04336">
    <property type="taxonomic scope" value="Archaea"/>
</dbReference>
<dbReference type="HOGENOM" id="CLU_048697_0_0_2"/>
<dbReference type="OrthoDB" id="18811at2157"/>
<dbReference type="UniPathway" id="UPA00640">
    <property type="reaction ID" value="UER00698"/>
</dbReference>
<dbReference type="Proteomes" id="UP000000590">
    <property type="component" value="Chromosome"/>
</dbReference>
<dbReference type="GO" id="GO:0030269">
    <property type="term" value="F:tetrahydromethanopterin S-methyltransferase activity"/>
    <property type="evidence" value="ECO:0007669"/>
    <property type="project" value="UniProtKB-UniRule"/>
</dbReference>
<dbReference type="GO" id="GO:0019386">
    <property type="term" value="P:methanogenesis, from carbon dioxide"/>
    <property type="evidence" value="ECO:0007669"/>
    <property type="project" value="UniProtKB-UniRule"/>
</dbReference>
<dbReference type="GO" id="GO:0032259">
    <property type="term" value="P:methylation"/>
    <property type="evidence" value="ECO:0007669"/>
    <property type="project" value="UniProtKB-KW"/>
</dbReference>
<dbReference type="GO" id="GO:0006730">
    <property type="term" value="P:one-carbon metabolic process"/>
    <property type="evidence" value="ECO:0007669"/>
    <property type="project" value="UniProtKB-UniRule"/>
</dbReference>
<dbReference type="Gene3D" id="3.20.20.20">
    <property type="entry name" value="Dihydropteroate synthase-like"/>
    <property type="match status" value="1"/>
</dbReference>
<dbReference type="HAMAP" id="MF_01501">
    <property type="entry name" value="MtrH"/>
    <property type="match status" value="1"/>
</dbReference>
<dbReference type="InterPro" id="IPR011005">
    <property type="entry name" value="Dihydropteroate_synth-like_sf"/>
</dbReference>
<dbReference type="InterPro" id="IPR023467">
    <property type="entry name" value="MeTrfase_MtrH/MtxH"/>
</dbReference>
<dbReference type="InterPro" id="IPR028342">
    <property type="entry name" value="MtrH"/>
</dbReference>
<dbReference type="NCBIfam" id="TIGR01114">
    <property type="entry name" value="mtrH"/>
    <property type="match status" value="1"/>
</dbReference>
<dbReference type="Pfam" id="PF02007">
    <property type="entry name" value="MtrH"/>
    <property type="match status" value="1"/>
</dbReference>
<dbReference type="PIRSF" id="PIRSF500206">
    <property type="entry name" value="MtrH"/>
    <property type="match status" value="1"/>
</dbReference>
<dbReference type="PIRSF" id="PIRSF004960">
    <property type="entry name" value="MtrH_MtxH"/>
    <property type="match status" value="1"/>
</dbReference>
<dbReference type="SUPFAM" id="SSF51717">
    <property type="entry name" value="Dihydropteroate synthetase-like"/>
    <property type="match status" value="1"/>
</dbReference>
<reference key="1">
    <citation type="journal article" date="2004" name="J. Bacteriol.">
        <title>Complete genome sequence of the genetically tractable hydrogenotrophic methanogen Methanococcus maripaludis.</title>
        <authorList>
            <person name="Hendrickson E.L."/>
            <person name="Kaul R."/>
            <person name="Zhou Y."/>
            <person name="Bovee D."/>
            <person name="Chapman P."/>
            <person name="Chung J."/>
            <person name="Conway de Macario E."/>
            <person name="Dodsworth J.A."/>
            <person name="Gillett W."/>
            <person name="Graham D.E."/>
            <person name="Hackett M."/>
            <person name="Haydock A.K."/>
            <person name="Kang A."/>
            <person name="Land M.L."/>
            <person name="Levy R."/>
            <person name="Lie T.J."/>
            <person name="Major T.A."/>
            <person name="Moore B.C."/>
            <person name="Porat I."/>
            <person name="Palmeiri A."/>
            <person name="Rouse G."/>
            <person name="Saenphimmachak C."/>
            <person name="Soell D."/>
            <person name="Van Dien S."/>
            <person name="Wang T."/>
            <person name="Whitman W.B."/>
            <person name="Xia Q."/>
            <person name="Zhang Y."/>
            <person name="Larimer F.W."/>
            <person name="Olson M.V."/>
            <person name="Leigh J.A."/>
        </authorList>
    </citation>
    <scope>NUCLEOTIDE SEQUENCE [LARGE SCALE GENOMIC DNA]</scope>
    <source>
        <strain>DSM 14266 / JCM 13030 / NBRC 101832 / S2 / LL</strain>
    </source>
</reference>
<accession>Q6LWY7</accession>
<sequence>MFRFDKEQMVIEFAGAKFGGQPGEYPTALSGTIFYSRHKIVEDAKKGIFDKKAAEALINKQAEMQDITGNSAFVQVFGGTEEALVNYIDFVSEVWDGPMLLDSTSGKARMAAANRATEAGYANQCIYNSINVAAEDEEIENLTNSDVEASIVLCFDPMDPSVAGKLNVLNDGGKTKDIGMLELAEKAGIKYPLIDVAVTPMGNGAGHAVRAAFAVKAKLGLPVGSGIHNVPSAWDWLREFRKGLREEGKDQIAKDVHHVCDIGANIVQTMTSGDYVLYGPIDNAELAFPAVAMTDMIIAETAKEMGTVPVAEHPLNKLI</sequence>
<comment type="function">
    <text evidence="1">Part of a complex that catalyzes the formation of methyl-coenzyme M and tetrahydromethanopterin from coenzyme M and methyl-tetrahydromethanopterin. This is an energy-conserving, sodium-ion translocating step. MtrH catalyzes the transfer of the methyl group from methyl-tetrahydromethanopterin to the corrinoid prosthetic group of MtrA.</text>
</comment>
<comment type="catalytic activity">
    <reaction evidence="1">
        <text>5-methyl-5,6,7,8-tetrahydromethanopterin + coenzyme M + 2 Na(+)(in) = 5,6,7,8-tetrahydromethanopterin + methyl-coenzyme M + 2 Na(+)(out)</text>
        <dbReference type="Rhea" id="RHEA:53492"/>
        <dbReference type="ChEBI" id="CHEBI:29101"/>
        <dbReference type="ChEBI" id="CHEBI:58103"/>
        <dbReference type="ChEBI" id="CHEBI:58116"/>
        <dbReference type="ChEBI" id="CHEBI:58286"/>
        <dbReference type="ChEBI" id="CHEBI:58319"/>
        <dbReference type="EC" id="7.2.1.4"/>
    </reaction>
</comment>
<comment type="pathway">
    <text evidence="1">One-carbon metabolism; methanogenesis from CO(2); methyl-coenzyme M from 5,10-methylene-5,6,7,8-tetrahydromethanopterin: step 2/2.</text>
</comment>
<comment type="subunit">
    <text evidence="1">The complex is composed of 8 subunits; MtrA, MtrB, MtrC, MtrD, MtrE, MtrF, MtrG and MtrH.</text>
</comment>
<comment type="similarity">
    <text evidence="1">Belongs to the MtrH family.</text>
</comment>
<gene>
    <name evidence="1" type="primary">mtrH</name>
    <name type="ordered locus">MMP1567</name>
</gene>
<name>MTRH_METMP</name>
<protein>
    <recommendedName>
        <fullName evidence="1">Tetrahydromethanopterin S-methyltransferase subunit H</fullName>
        <ecNumber evidence="1">7.2.1.4</ecNumber>
    </recommendedName>
    <alternativeName>
        <fullName evidence="1">N5-methyltetrahydromethanopterin--coenzyme M methyltransferase subunit H</fullName>
    </alternativeName>
</protein>
<evidence type="ECO:0000255" key="1">
    <source>
        <dbReference type="HAMAP-Rule" id="MF_01501"/>
    </source>
</evidence>
<proteinExistence type="inferred from homology"/>
<keyword id="KW-0484">Methanogenesis</keyword>
<keyword id="KW-0489">Methyltransferase</keyword>
<keyword id="KW-0554">One-carbon metabolism</keyword>
<keyword id="KW-1185">Reference proteome</keyword>
<keyword id="KW-0808">Transferase</keyword>
<keyword id="KW-1278">Translocase</keyword>
<feature type="chain" id="PRO_0000147566" description="Tetrahydromethanopterin S-methyltransferase subunit H">
    <location>
        <begin position="1"/>
        <end position="319"/>
    </location>
</feature>
<organism>
    <name type="scientific">Methanococcus maripaludis (strain DSM 14266 / JCM 13030 / NBRC 101832 / S2 / LL)</name>
    <dbReference type="NCBI Taxonomy" id="267377"/>
    <lineage>
        <taxon>Archaea</taxon>
        <taxon>Methanobacteriati</taxon>
        <taxon>Methanobacteriota</taxon>
        <taxon>Methanomada group</taxon>
        <taxon>Methanococci</taxon>
        <taxon>Methanococcales</taxon>
        <taxon>Methanococcaceae</taxon>
        <taxon>Methanococcus</taxon>
    </lineage>
</organism>